<dbReference type="EC" id="4.2.1.49" evidence="1"/>
<dbReference type="EMBL" id="AE014292">
    <property type="protein sequence ID" value="AAN34104.1"/>
    <property type="molecule type" value="Genomic_DNA"/>
</dbReference>
<dbReference type="EMBL" id="CP002998">
    <property type="protein sequence ID" value="AEM20380.1"/>
    <property type="molecule type" value="Genomic_DNA"/>
</dbReference>
<dbReference type="RefSeq" id="WP_004690364.1">
    <property type="nucleotide sequence ID" value="NZ_KN046805.1"/>
</dbReference>
<dbReference type="SMR" id="Q8FVB2"/>
<dbReference type="GeneID" id="55592564"/>
<dbReference type="KEGG" id="bms:BRA0932"/>
<dbReference type="KEGG" id="bsi:BS1330_II0924"/>
<dbReference type="PATRIC" id="fig|204722.22.peg.2521"/>
<dbReference type="HOGENOM" id="CLU_018868_0_1_5"/>
<dbReference type="PhylomeDB" id="Q8FVB2"/>
<dbReference type="UniPathway" id="UPA00379">
    <property type="reaction ID" value="UER00550"/>
</dbReference>
<dbReference type="Proteomes" id="UP000007104">
    <property type="component" value="Chromosome II"/>
</dbReference>
<dbReference type="GO" id="GO:0005737">
    <property type="term" value="C:cytoplasm"/>
    <property type="evidence" value="ECO:0007669"/>
    <property type="project" value="UniProtKB-SubCell"/>
</dbReference>
<dbReference type="GO" id="GO:0016153">
    <property type="term" value="F:urocanate hydratase activity"/>
    <property type="evidence" value="ECO:0007669"/>
    <property type="project" value="UniProtKB-UniRule"/>
</dbReference>
<dbReference type="GO" id="GO:0019556">
    <property type="term" value="P:L-histidine catabolic process to glutamate and formamide"/>
    <property type="evidence" value="ECO:0007669"/>
    <property type="project" value="UniProtKB-UniPathway"/>
</dbReference>
<dbReference type="GO" id="GO:0019557">
    <property type="term" value="P:L-histidine catabolic process to glutamate and formate"/>
    <property type="evidence" value="ECO:0007669"/>
    <property type="project" value="UniProtKB-UniPathway"/>
</dbReference>
<dbReference type="FunFam" id="3.40.50.10730:FF:000001">
    <property type="entry name" value="Urocanate hydratase"/>
    <property type="match status" value="1"/>
</dbReference>
<dbReference type="Gene3D" id="3.40.50.10730">
    <property type="entry name" value="Urocanase like domains"/>
    <property type="match status" value="1"/>
</dbReference>
<dbReference type="Gene3D" id="3.40.1770.10">
    <property type="entry name" value="Urocanase superfamily"/>
    <property type="match status" value="1"/>
</dbReference>
<dbReference type="HAMAP" id="MF_00577">
    <property type="entry name" value="HutU"/>
    <property type="match status" value="1"/>
</dbReference>
<dbReference type="InterPro" id="IPR055351">
    <property type="entry name" value="Urocanase"/>
</dbReference>
<dbReference type="InterPro" id="IPR023637">
    <property type="entry name" value="Urocanase-like"/>
</dbReference>
<dbReference type="InterPro" id="IPR035401">
    <property type="entry name" value="Urocanase_C"/>
</dbReference>
<dbReference type="InterPro" id="IPR038364">
    <property type="entry name" value="Urocanase_central_sf"/>
</dbReference>
<dbReference type="InterPro" id="IPR023636">
    <property type="entry name" value="Urocanase_CS"/>
</dbReference>
<dbReference type="InterPro" id="IPR035400">
    <property type="entry name" value="Urocanase_N"/>
</dbReference>
<dbReference type="InterPro" id="IPR035085">
    <property type="entry name" value="Urocanase_Rossmann-like"/>
</dbReference>
<dbReference type="InterPro" id="IPR036190">
    <property type="entry name" value="Urocanase_sf"/>
</dbReference>
<dbReference type="NCBIfam" id="TIGR01228">
    <property type="entry name" value="hutU"/>
    <property type="match status" value="1"/>
</dbReference>
<dbReference type="NCBIfam" id="NF003820">
    <property type="entry name" value="PRK05414.1"/>
    <property type="match status" value="1"/>
</dbReference>
<dbReference type="PANTHER" id="PTHR12216">
    <property type="entry name" value="UROCANATE HYDRATASE"/>
    <property type="match status" value="1"/>
</dbReference>
<dbReference type="PANTHER" id="PTHR12216:SF4">
    <property type="entry name" value="UROCANATE HYDRATASE"/>
    <property type="match status" value="1"/>
</dbReference>
<dbReference type="Pfam" id="PF01175">
    <property type="entry name" value="Urocanase"/>
    <property type="match status" value="1"/>
</dbReference>
<dbReference type="Pfam" id="PF17392">
    <property type="entry name" value="Urocanase_C"/>
    <property type="match status" value="1"/>
</dbReference>
<dbReference type="Pfam" id="PF17391">
    <property type="entry name" value="Urocanase_N"/>
    <property type="match status" value="1"/>
</dbReference>
<dbReference type="PIRSF" id="PIRSF001423">
    <property type="entry name" value="Urocanate_hydrat"/>
    <property type="match status" value="1"/>
</dbReference>
<dbReference type="SUPFAM" id="SSF111326">
    <property type="entry name" value="Urocanase"/>
    <property type="match status" value="1"/>
</dbReference>
<dbReference type="PROSITE" id="PS01233">
    <property type="entry name" value="UROCANASE"/>
    <property type="match status" value="1"/>
</dbReference>
<gene>
    <name evidence="1" type="primary">hutU</name>
    <name type="ordered locus">BRA0932</name>
    <name type="ordered locus">BS1330_II0924</name>
</gene>
<organism>
    <name type="scientific">Brucella suis biovar 1 (strain 1330)</name>
    <dbReference type="NCBI Taxonomy" id="204722"/>
    <lineage>
        <taxon>Bacteria</taxon>
        <taxon>Pseudomonadati</taxon>
        <taxon>Pseudomonadota</taxon>
        <taxon>Alphaproteobacteria</taxon>
        <taxon>Hyphomicrobiales</taxon>
        <taxon>Brucellaceae</taxon>
        <taxon>Brucella/Ochrobactrum group</taxon>
        <taxon>Brucella</taxon>
    </lineage>
</organism>
<accession>Q8FVB2</accession>
<accession>G0KDU2</accession>
<evidence type="ECO:0000255" key="1">
    <source>
        <dbReference type="HAMAP-Rule" id="MF_00577"/>
    </source>
</evidence>
<evidence type="ECO:0000256" key="2">
    <source>
        <dbReference type="SAM" id="MobiDB-lite"/>
    </source>
</evidence>
<name>HUTU_BRUSU</name>
<proteinExistence type="inferred from homology"/>
<feature type="chain" id="PRO_0000207337" description="Urocanate hydratase">
    <location>
        <begin position="1"/>
        <end position="557"/>
    </location>
</feature>
<feature type="region of interest" description="Disordered" evidence="2">
    <location>
        <begin position="1"/>
        <end position="20"/>
    </location>
</feature>
<feature type="active site" evidence="1">
    <location>
        <position position="410"/>
    </location>
</feature>
<feature type="binding site" evidence="1">
    <location>
        <begin position="52"/>
        <end position="53"/>
    </location>
    <ligand>
        <name>NAD(+)</name>
        <dbReference type="ChEBI" id="CHEBI:57540"/>
    </ligand>
</feature>
<feature type="binding site" evidence="1">
    <location>
        <position position="130"/>
    </location>
    <ligand>
        <name>NAD(+)</name>
        <dbReference type="ChEBI" id="CHEBI:57540"/>
    </ligand>
</feature>
<feature type="binding site" evidence="1">
    <location>
        <begin position="176"/>
        <end position="178"/>
    </location>
    <ligand>
        <name>NAD(+)</name>
        <dbReference type="ChEBI" id="CHEBI:57540"/>
    </ligand>
</feature>
<feature type="binding site" evidence="1">
    <location>
        <position position="196"/>
    </location>
    <ligand>
        <name>NAD(+)</name>
        <dbReference type="ChEBI" id="CHEBI:57540"/>
    </ligand>
</feature>
<feature type="binding site" evidence="1">
    <location>
        <position position="201"/>
    </location>
    <ligand>
        <name>NAD(+)</name>
        <dbReference type="ChEBI" id="CHEBI:57540"/>
    </ligand>
</feature>
<feature type="binding site" evidence="1">
    <location>
        <begin position="242"/>
        <end position="243"/>
    </location>
    <ligand>
        <name>NAD(+)</name>
        <dbReference type="ChEBI" id="CHEBI:57540"/>
    </ligand>
</feature>
<feature type="binding site" evidence="1">
    <location>
        <begin position="263"/>
        <end position="267"/>
    </location>
    <ligand>
        <name>NAD(+)</name>
        <dbReference type="ChEBI" id="CHEBI:57540"/>
    </ligand>
</feature>
<feature type="binding site" evidence="1">
    <location>
        <begin position="273"/>
        <end position="274"/>
    </location>
    <ligand>
        <name>NAD(+)</name>
        <dbReference type="ChEBI" id="CHEBI:57540"/>
    </ligand>
</feature>
<feature type="binding site" evidence="1">
    <location>
        <position position="322"/>
    </location>
    <ligand>
        <name>NAD(+)</name>
        <dbReference type="ChEBI" id="CHEBI:57540"/>
    </ligand>
</feature>
<feature type="binding site" evidence="1">
    <location>
        <position position="492"/>
    </location>
    <ligand>
        <name>NAD(+)</name>
        <dbReference type="ChEBI" id="CHEBI:57540"/>
    </ligand>
</feature>
<protein>
    <recommendedName>
        <fullName evidence="1">Urocanate hydratase</fullName>
        <shortName evidence="1">Urocanase</shortName>
        <ecNumber evidence="1">4.2.1.49</ecNumber>
    </recommendedName>
    <alternativeName>
        <fullName evidence="1">Imidazolonepropionate hydrolase</fullName>
    </alternativeName>
</protein>
<sequence length="557" mass="61300">MSNPRHNEREVRSPRGDELNAKSWLTEAPLRMLMNNLDPDVAERPHELVVYGGIGRAARTWDDFDRIVATLKTLNDDETLLVQSGKPVGVFRTHKDAPRVLIANSNLVPHWANWDHFNELDKKDLAMYGQMTAGSWIYIGAQGIVQGTYETFVEAGRQHYGGNLKGRWILTGGLGGMGGAQPLAAVMAGACCLAVECDETRADFRLRTRYVDEKTHSLDEALAKIDAWTKAGEAKSIALIGNAAEIFPELVKRGVKPDIVTDQTSAHDPVHGYLPLGWTVAEWRAKQENDPKAVEKVARASMKVQVQAMLDFWNAGIPTVDYGNNIRQMALEEGLENAFAFPGFVPAYIRPLFCRGIGPFRWAALSGDPEDIAKTDAKVKELLPDNKHLHNWLDMAKERIAFQGLPARICWVGLGDRHRLGLAFNEMVRNGELKAPIVIGRDHLDSGSVASPNRETEAMKDGSDAVSDWPLLNALLNTASGATWVSLHHGGGVGMGFSQHAGMVICCDGTEDADRRLERVLWNDPATGVMRHADAGYDIALDWARKQGLRLPAILGN</sequence>
<comment type="function">
    <text evidence="1">Catalyzes the conversion of urocanate to 4-imidazolone-5-propionate.</text>
</comment>
<comment type="catalytic activity">
    <reaction evidence="1">
        <text>4-imidazolone-5-propanoate = trans-urocanate + H2O</text>
        <dbReference type="Rhea" id="RHEA:13101"/>
        <dbReference type="ChEBI" id="CHEBI:15377"/>
        <dbReference type="ChEBI" id="CHEBI:17771"/>
        <dbReference type="ChEBI" id="CHEBI:77893"/>
        <dbReference type="EC" id="4.2.1.49"/>
    </reaction>
</comment>
<comment type="cofactor">
    <cofactor evidence="1">
        <name>NAD(+)</name>
        <dbReference type="ChEBI" id="CHEBI:57540"/>
    </cofactor>
    <text evidence="1">Binds 1 NAD(+) per subunit.</text>
</comment>
<comment type="pathway">
    <text evidence="1">Amino-acid degradation; L-histidine degradation into L-glutamate; N-formimidoyl-L-glutamate from L-histidine: step 2/3.</text>
</comment>
<comment type="subcellular location">
    <subcellularLocation>
        <location evidence="1">Cytoplasm</location>
    </subcellularLocation>
</comment>
<comment type="similarity">
    <text evidence="1">Belongs to the urocanase family.</text>
</comment>
<reference key="1">
    <citation type="journal article" date="2002" name="Proc. Natl. Acad. Sci. U.S.A.">
        <title>The Brucella suis genome reveals fundamental similarities between animal and plant pathogens and symbionts.</title>
        <authorList>
            <person name="Paulsen I.T."/>
            <person name="Seshadri R."/>
            <person name="Nelson K.E."/>
            <person name="Eisen J.A."/>
            <person name="Heidelberg J.F."/>
            <person name="Read T.D."/>
            <person name="Dodson R.J."/>
            <person name="Umayam L.A."/>
            <person name="Brinkac L.M."/>
            <person name="Beanan M.J."/>
            <person name="Daugherty S.C."/>
            <person name="DeBoy R.T."/>
            <person name="Durkin A.S."/>
            <person name="Kolonay J.F."/>
            <person name="Madupu R."/>
            <person name="Nelson W.C."/>
            <person name="Ayodeji B."/>
            <person name="Kraul M."/>
            <person name="Shetty J."/>
            <person name="Malek J.A."/>
            <person name="Van Aken S.E."/>
            <person name="Riedmuller S."/>
            <person name="Tettelin H."/>
            <person name="Gill S.R."/>
            <person name="White O."/>
            <person name="Salzberg S.L."/>
            <person name="Hoover D.L."/>
            <person name="Lindler L.E."/>
            <person name="Halling S.M."/>
            <person name="Boyle S.M."/>
            <person name="Fraser C.M."/>
        </authorList>
    </citation>
    <scope>NUCLEOTIDE SEQUENCE [LARGE SCALE GENOMIC DNA]</scope>
    <source>
        <strain>1330</strain>
    </source>
</reference>
<reference key="2">
    <citation type="journal article" date="2011" name="J. Bacteriol.">
        <title>Revised genome sequence of Brucella suis 1330.</title>
        <authorList>
            <person name="Tae H."/>
            <person name="Shallom S."/>
            <person name="Settlage R."/>
            <person name="Preston D."/>
            <person name="Adams L.G."/>
            <person name="Garner H.R."/>
        </authorList>
    </citation>
    <scope>NUCLEOTIDE SEQUENCE [LARGE SCALE GENOMIC DNA]</scope>
    <source>
        <strain>1330</strain>
    </source>
</reference>
<keyword id="KW-0963">Cytoplasm</keyword>
<keyword id="KW-0369">Histidine metabolism</keyword>
<keyword id="KW-0456">Lyase</keyword>
<keyword id="KW-0520">NAD</keyword>